<dbReference type="EMBL" id="X97600">
    <property type="protein sequence ID" value="CAA66201.1"/>
    <property type="molecule type" value="mRNA"/>
</dbReference>
<dbReference type="PIR" id="S78083">
    <property type="entry name" value="S78083"/>
</dbReference>
<dbReference type="PDB" id="1AA1">
    <property type="method" value="X-ray"/>
    <property type="resolution" value="2.20 A"/>
    <property type="chains" value="C/F/I/S=58-180"/>
</dbReference>
<dbReference type="PDB" id="1AUS">
    <property type="method" value="X-ray"/>
    <property type="resolution" value="2.20 A"/>
    <property type="chains" value="S/T/U/V=58-180"/>
</dbReference>
<dbReference type="PDB" id="1IR1">
    <property type="method" value="X-ray"/>
    <property type="resolution" value="1.80 A"/>
    <property type="chains" value="S/T/U/V=58-180"/>
</dbReference>
<dbReference type="PDB" id="1UPM">
    <property type="method" value="X-ray"/>
    <property type="resolution" value="2.30 A"/>
    <property type="chains" value="C/F/I/M/P/S/T/W=58-180"/>
</dbReference>
<dbReference type="PDB" id="1UPP">
    <property type="method" value="X-ray"/>
    <property type="resolution" value="2.30 A"/>
    <property type="chains" value="I/J/K/L=58-180"/>
</dbReference>
<dbReference type="PDB" id="1UZD">
    <property type="method" value="X-ray"/>
    <property type="resolution" value="2.40 A"/>
    <property type="chains" value="C/F/I/J/M/P/T/W=103-121"/>
</dbReference>
<dbReference type="PDB" id="8QJ0">
    <property type="method" value="X-ray"/>
    <property type="resolution" value="2.30 A"/>
    <property type="chains" value="S/T/U/V=58-180"/>
</dbReference>
<dbReference type="PDB" id="9CQ5">
    <property type="method" value="X-ray"/>
    <property type="resolution" value="2.50 A"/>
    <property type="chains" value="I/J/K/L/M/N/O/P=58-180"/>
</dbReference>
<dbReference type="PDBsum" id="1AA1"/>
<dbReference type="PDBsum" id="1AUS"/>
<dbReference type="PDBsum" id="1IR1"/>
<dbReference type="PDBsum" id="1UPM"/>
<dbReference type="PDBsum" id="1UPP"/>
<dbReference type="PDBsum" id="1UZD"/>
<dbReference type="PDBsum" id="8QJ0"/>
<dbReference type="PDBsum" id="9CQ5"/>
<dbReference type="SMR" id="Q43832"/>
<dbReference type="IntAct" id="Q43832">
    <property type="interactions" value="1"/>
</dbReference>
<dbReference type="MINT" id="Q43832"/>
<dbReference type="OrthoDB" id="561at2759"/>
<dbReference type="EvolutionaryTrace" id="Q43832"/>
<dbReference type="Proteomes" id="UP001155700">
    <property type="component" value="Unplaced"/>
</dbReference>
<dbReference type="GO" id="GO:0009507">
    <property type="term" value="C:chloroplast"/>
    <property type="evidence" value="ECO:0007669"/>
    <property type="project" value="UniProtKB-SubCell"/>
</dbReference>
<dbReference type="GO" id="GO:0016984">
    <property type="term" value="F:ribulose-bisphosphate carboxylase activity"/>
    <property type="evidence" value="ECO:0007669"/>
    <property type="project" value="UniProtKB-UniRule"/>
</dbReference>
<dbReference type="GO" id="GO:0009853">
    <property type="term" value="P:photorespiration"/>
    <property type="evidence" value="ECO:0007669"/>
    <property type="project" value="UniProtKB-KW"/>
</dbReference>
<dbReference type="GO" id="GO:0019253">
    <property type="term" value="P:reductive pentose-phosphate cycle"/>
    <property type="evidence" value="ECO:0007669"/>
    <property type="project" value="UniProtKB-UniRule"/>
</dbReference>
<dbReference type="CDD" id="cd03527">
    <property type="entry name" value="RuBisCO_small"/>
    <property type="match status" value="1"/>
</dbReference>
<dbReference type="FunFam" id="3.30.190.10:FF:000001">
    <property type="entry name" value="Ribulose bisphosphate carboxylase small chain, chloroplastic"/>
    <property type="match status" value="1"/>
</dbReference>
<dbReference type="Gene3D" id="3.30.190.10">
    <property type="entry name" value="Ribulose bisphosphate carboxylase, small subunit"/>
    <property type="match status" value="1"/>
</dbReference>
<dbReference type="HAMAP" id="MF_00859">
    <property type="entry name" value="RuBisCO_S_bact"/>
    <property type="match status" value="1"/>
</dbReference>
<dbReference type="InterPro" id="IPR024681">
    <property type="entry name" value="RuBisCO_ssu"/>
</dbReference>
<dbReference type="InterPro" id="IPR000894">
    <property type="entry name" value="RuBisCO_ssu_dom"/>
</dbReference>
<dbReference type="InterPro" id="IPR024680">
    <property type="entry name" value="RuBisCO_ssu_N"/>
</dbReference>
<dbReference type="InterPro" id="IPR036385">
    <property type="entry name" value="RuBisCO_ssu_sf"/>
</dbReference>
<dbReference type="PANTHER" id="PTHR31262">
    <property type="entry name" value="RIBULOSE BISPHOSPHATE CARBOXYLASE SMALL CHAIN 1, CHLOROPLASTIC"/>
    <property type="match status" value="1"/>
</dbReference>
<dbReference type="PANTHER" id="PTHR31262:SF10">
    <property type="entry name" value="RIBULOSE BISPHOSPHATE CARBOXYLASE SMALL SUBUNIT 1A, CHLOROPLASTIC-RELATED"/>
    <property type="match status" value="1"/>
</dbReference>
<dbReference type="Pfam" id="PF12338">
    <property type="entry name" value="RbcS"/>
    <property type="match status" value="1"/>
</dbReference>
<dbReference type="Pfam" id="PF00101">
    <property type="entry name" value="RuBisCO_small"/>
    <property type="match status" value="1"/>
</dbReference>
<dbReference type="PRINTS" id="PR00152">
    <property type="entry name" value="RUBISCOSMALL"/>
</dbReference>
<dbReference type="SMART" id="SM00961">
    <property type="entry name" value="RuBisCO_small"/>
    <property type="match status" value="1"/>
</dbReference>
<dbReference type="SUPFAM" id="SSF55239">
    <property type="entry name" value="RuBisCO, small subunit"/>
    <property type="match status" value="1"/>
</dbReference>
<gene>
    <name evidence="1" type="primary">RBCS2</name>
</gene>
<protein>
    <recommendedName>
        <fullName evidence="1">Ribulose bisphosphate carboxylase small subunit, chloroplastic 2</fullName>
        <shortName evidence="1">RuBisCO small subunit 2</shortName>
    </recommendedName>
</protein>
<proteinExistence type="evidence at protein level"/>
<comment type="function">
    <text evidence="1 8 9 10 11 12 13 14">RuBisCO catalyzes two reactions: the carboxylation of D-ribulose 1,5-bisphosphate, the primary event in carbon dioxide fixation, as well as the oxidative fragmentation of the pentose substrate. Both reactions occur simultaneously and in competition at the same active site. Although the small subunit is not catalytic it is essential for maximal activity.</text>
</comment>
<comment type="subunit">
    <text evidence="1 2 3 4 5 6 7">Heterohexadecamer of 8 large and 8 small subunits.</text>
</comment>
<comment type="subcellular location">
    <subcellularLocation>
        <location evidence="1">Plastid</location>
        <location evidence="1">Chloroplast</location>
    </subcellularLocation>
</comment>
<comment type="miscellaneous">
    <text evidence="1 2 3 4 5 6 7">The basic functional RuBisCO is composed of a large chain homodimer in a 'head-to-tail' conformation. In form I RuBisCO this homodimer is arranged in a barrel-like tetramer with the small subunits forming a tetrameric 'cap' on each end of the 'barrel'.</text>
</comment>
<comment type="similarity">
    <text evidence="1">Belongs to the RuBisCO small chain family.</text>
</comment>
<comment type="online information" name="Protein Spotlight">
    <link uri="https://www.proteinspotlight.org/back_issues/038"/>
    <text>The Plant Kingdom's sloth - Issue 38 of September 2003</text>
</comment>
<organism>
    <name type="scientific">Spinacia oleracea</name>
    <name type="common">Spinach</name>
    <dbReference type="NCBI Taxonomy" id="3562"/>
    <lineage>
        <taxon>Eukaryota</taxon>
        <taxon>Viridiplantae</taxon>
        <taxon>Streptophyta</taxon>
        <taxon>Embryophyta</taxon>
        <taxon>Tracheophyta</taxon>
        <taxon>Spermatophyta</taxon>
        <taxon>Magnoliopsida</taxon>
        <taxon>eudicotyledons</taxon>
        <taxon>Gunneridae</taxon>
        <taxon>Pentapetalae</taxon>
        <taxon>Caryophyllales</taxon>
        <taxon>Chenopodiaceae</taxon>
        <taxon>Chenopodioideae</taxon>
        <taxon>Anserineae</taxon>
        <taxon>Spinacia</taxon>
    </lineage>
</organism>
<feature type="transit peptide" description="Chloroplast" evidence="1">
    <location>
        <begin position="1"/>
        <end position="56"/>
    </location>
</feature>
<feature type="chain" id="PRO_0000031558" description="Ribulose bisphosphate carboxylase small subunit, chloroplastic 2" evidence="1">
    <location>
        <begin position="57"/>
        <end position="180"/>
    </location>
</feature>
<feature type="turn" evidence="19">
    <location>
        <begin position="71"/>
        <end position="74"/>
    </location>
</feature>
<feature type="helix" evidence="19">
    <location>
        <begin position="80"/>
        <end position="92"/>
    </location>
</feature>
<feature type="strand" evidence="19">
    <location>
        <begin position="96"/>
        <end position="104"/>
    </location>
</feature>
<feature type="strand" evidence="20">
    <location>
        <begin position="120"/>
        <end position="122"/>
    </location>
</feature>
<feature type="strand" evidence="19">
    <location>
        <begin position="125"/>
        <end position="128"/>
    </location>
</feature>
<feature type="helix" evidence="19">
    <location>
        <begin position="137"/>
        <end position="150"/>
    </location>
</feature>
<feature type="strand" evidence="19">
    <location>
        <begin position="154"/>
        <end position="162"/>
    </location>
</feature>
<feature type="turn" evidence="19">
    <location>
        <begin position="163"/>
        <end position="166"/>
    </location>
</feature>
<feature type="strand" evidence="19">
    <location>
        <begin position="167"/>
        <end position="175"/>
    </location>
</feature>
<reference key="1">
    <citation type="submission" date="1996-04" db="EMBL/GenBank/DDBJ databases">
        <title>cDNA cloning and expression of a ribulose-1,5-bisphophate carboxylase small subunit precursor in Spinacia oleracea.</title>
        <authorList>
            <person name="Diogon T."/>
            <person name="Capelli N."/>
            <person name="Greppin H."/>
            <person name="Simon P."/>
        </authorList>
    </citation>
    <scope>NUCLEOTIDE SEQUENCE [MRNA]</scope>
    <source>
        <strain>cv. Nobel</strain>
        <tissue>Leaf</tissue>
    </source>
</reference>
<reference key="2">
    <citation type="journal article" date="1989" name="Science">
        <title>Reexamination of the three-dimensional structure of the small subunit of RuBisCo from higher plants.</title>
        <authorList>
            <person name="Knight S."/>
            <person name="Andersson I."/>
            <person name="Braenden C.-I."/>
        </authorList>
    </citation>
    <scope>X-RAY CRYSTALLOGRAPHY (2.8 ANGSTROMS) OF ACTIVATED HOLOENZYME IN COMPLEX WITH TRANSITION-STATE ANALOG</scope>
    <scope>SUBUNIT</scope>
</reference>
<reference key="3">
    <citation type="journal article" date="1990" name="J. Mol. Biol.">
        <title>Crystallographic analysis of ribulose 1,5-bisphosphate carboxylase from spinach at 2.4-A resolution. Subunit interactions and active site.</title>
        <authorList>
            <person name="Knight S."/>
            <person name="Andersson I."/>
            <person name="Braenden C.-I."/>
        </authorList>
    </citation>
    <scope>X-RAY CRYSTALLOGRAPHY (2.4 ANGSTROMS) OF ACTIVATED HOLOENZYME IN COMPLEX WITH TRANSITION-STATE ANALOG 2-CABP AND MAGNESIUM</scope>
</reference>
<reference key="4">
    <citation type="journal article" date="1996" name="J. Biol. Chem.">
        <title>A common structural basis for the inhibition of ribulose 1,5-bisphosphate carboxylase by 4-carboxyarabinitol 1,5-bisphosphate and xylulose 1,5-bisphosphate.</title>
        <authorList>
            <person name="Taylor T.C."/>
            <person name="Fothergill M.D."/>
            <person name="Andersson I."/>
        </authorList>
    </citation>
    <scope>X-RAY CRYSTALLOGRAPHY (2.3 ANGSTROMS) OF 13-123 OF INACTIVE HOLOENZYME IN COMPLEX WITH INHIBITORS 4-CABP AND XUBP</scope>
    <scope>SUBUNIT</scope>
</reference>
<reference key="5">
    <citation type="journal article" date="1996" name="J. Mol. Biol.">
        <title>Large structures at high resolution: the 1.6-A crystal structure of spinach ribulose-1,5-bisphosphate carboxylase/oxygenase complexed with 2-carboxyarabinitol bisphosphate.</title>
        <authorList>
            <person name="Andersson I."/>
        </authorList>
    </citation>
    <scope>X-RAY CRYSTALLOGRAPHY (1.6 ANGSTROMS) OF ACTIVATED HOLOENZYME IN COMPLEX WITH THE TRANSITION-STATE ANALOG 2-CABP AND MAGNESIUM</scope>
    <scope>SUBUNIT</scope>
</reference>
<reference evidence="15 16" key="6">
    <citation type="journal article" date="1997" name="Biochemistry">
        <title>Structure of a product complex of spinach ribulose-1,5-bisphosphate carboxylase/oxygenase.</title>
        <authorList>
            <person name="Taylor T.C."/>
            <person name="Andersson I."/>
        </authorList>
    </citation>
    <scope>X-RAY CRYSTALLOGRAPHY (2.20 ANGSTROMS) OF 58-180 OF ACTIVATED HOLOENZYME IN COMPLEX WITH 3-PHOSPHOGLYCERATE AND MAGNESIUM</scope>
    <scope>SUBUNIT</scope>
</reference>
<reference key="7">
    <citation type="journal article" date="1997" name="J. Mol. Biol.">
        <title>The structure of the complex between rubisco and its natural substrate ribulose 1,5-bisphosphate.</title>
        <authorList>
            <person name="Taylor T.C."/>
            <person name="Andersson I."/>
        </authorList>
    </citation>
    <scope>X-RAY CRYSTALLOGRAPHY (2.1 ANGSTROMS) OF HOLOENZYME IN COMPLEX WITH SUBSTRATE AND CALCIUM IN ACTIVATED AND INACTIVATED STATE</scope>
    <scope>SUBUNIT</scope>
</reference>
<reference evidence="17 18" key="8">
    <citation type="journal article" date="2003" name="J. Mol. Biol.">
        <title>Calcium supports loop closure but not catalysis in Rubisco.</title>
        <authorList>
            <person name="Karkehabadi S."/>
            <person name="Taylor T.C."/>
            <person name="Andersson I."/>
        </authorList>
    </citation>
    <scope>X-RAY CRYSTALLOGRAPHY (2.30 ANGSTROMS) OF 58-180 OF HOLOENZYME IN COMPLEX WITH TRANSITION STATE ANALOG 2-CABP AND CALCIUM</scope>
</reference>
<keyword id="KW-0002">3D-structure</keyword>
<keyword id="KW-0113">Calvin cycle</keyword>
<keyword id="KW-0120">Carbon dioxide fixation</keyword>
<keyword id="KW-0150">Chloroplast</keyword>
<keyword id="KW-0601">Photorespiration</keyword>
<keyword id="KW-0602">Photosynthesis</keyword>
<keyword id="KW-0934">Plastid</keyword>
<keyword id="KW-1185">Reference proteome</keyword>
<keyword id="KW-0809">Transit peptide</keyword>
<accession>Q43832</accession>
<name>RBS2_SPIOL</name>
<sequence>MASSVLSSAAVATVSRTPAQASMVAPFTGLKSTVGFPATKKNDDITSLASNGGRVQCMKVWPTQNMKRYETLSYLPPLTTDQLARQVDYLLNNKWVPCLEFETDHGFVYREHHNSPGYYDGRYWTMWKLPMFGCTDPAQVLNELEECKKEYPNAFIRIIGFDSNRQVQCVSFIAYKPAGY</sequence>
<evidence type="ECO:0000255" key="1">
    <source>
        <dbReference type="HAMAP-Rule" id="MF_00860"/>
    </source>
</evidence>
<evidence type="ECO:0000269" key="2">
    <source>
    </source>
</evidence>
<evidence type="ECO:0000269" key="3">
    <source>
    </source>
</evidence>
<evidence type="ECO:0000269" key="4">
    <source>
    </source>
</evidence>
<evidence type="ECO:0000269" key="5">
    <source>
    </source>
</evidence>
<evidence type="ECO:0000269" key="6">
    <source>
    </source>
</evidence>
<evidence type="ECO:0000269" key="7">
    <source>
    </source>
</evidence>
<evidence type="ECO:0000305" key="8">
    <source>
    </source>
</evidence>
<evidence type="ECO:0000305" key="9">
    <source>
    </source>
</evidence>
<evidence type="ECO:0000305" key="10">
    <source>
    </source>
</evidence>
<evidence type="ECO:0000305" key="11">
    <source>
    </source>
</evidence>
<evidence type="ECO:0000305" key="12">
    <source>
    </source>
</evidence>
<evidence type="ECO:0000305" key="13">
    <source>
    </source>
</evidence>
<evidence type="ECO:0000305" key="14">
    <source>
    </source>
</evidence>
<evidence type="ECO:0007744" key="15">
    <source>
        <dbReference type="PDB" id="1AA1"/>
    </source>
</evidence>
<evidence type="ECO:0007744" key="16">
    <source>
        <dbReference type="PDB" id="1AUS"/>
    </source>
</evidence>
<evidence type="ECO:0007744" key="17">
    <source>
        <dbReference type="PDB" id="1UPM"/>
    </source>
</evidence>
<evidence type="ECO:0007744" key="18">
    <source>
        <dbReference type="PDB" id="1UPP"/>
    </source>
</evidence>
<evidence type="ECO:0007829" key="19">
    <source>
        <dbReference type="PDB" id="1IR1"/>
    </source>
</evidence>
<evidence type="ECO:0007829" key="20">
    <source>
        <dbReference type="PDB" id="8QJ0"/>
    </source>
</evidence>